<protein>
    <recommendedName>
        <fullName>Klotho</fullName>
        <ecNumber>3.2.1.31</ecNumber>
    </recommendedName>
    <component>
        <recommendedName>
            <fullName>Klotho peptide</fullName>
        </recommendedName>
    </component>
</protein>
<reference key="1">
    <citation type="journal article" date="1997" name="Nature">
        <title>Mutation of the mouse klotho gene leads to a syndrome resembling ageing.</title>
        <authorList>
            <person name="Kuro-o M."/>
            <person name="Matsumura Y."/>
            <person name="Aizawa H."/>
            <person name="Kawaguchi H."/>
            <person name="Suga T."/>
            <person name="Utsugi T."/>
            <person name="Ohyama Y."/>
            <person name="Kurabayashi M."/>
            <person name="Kaname T."/>
            <person name="Kume E."/>
            <person name="Iwasaki H."/>
            <person name="Iida A."/>
            <person name="Shiraki-Iida T."/>
            <person name="Nishikawa S."/>
            <person name="Nagai R."/>
            <person name="Nabeshima Y."/>
        </authorList>
    </citation>
    <scope>NUCLEOTIDE SEQUENCE [MRNA] (ISOFORMS 1 AND 2)</scope>
    <scope>FUNCTION</scope>
    <scope>TISSUE SPECIFICITY</scope>
    <scope>DEVELOPMENTAL STAGE</scope>
    <scope>SUBCELLULAR LOCATION</scope>
    <source>
        <tissue>Kidney</tissue>
    </source>
</reference>
<reference key="2">
    <citation type="journal article" date="1998" name="FEBS Lett.">
        <title>Structure of the mouse klotho gene and its two transcripts encoding membrane and secreted protein.</title>
        <authorList>
            <person name="Shiraki-Iida T."/>
            <person name="Aizawa H."/>
            <person name="Matsumura Y."/>
            <person name="Sekine S."/>
            <person name="Iida A."/>
            <person name="Anazawa H."/>
            <person name="Nagai R."/>
            <person name="Kuro-o M."/>
            <person name="Nabeshima Y."/>
        </authorList>
    </citation>
    <scope>NUCLEOTIDE SEQUENCE [GENOMIC DNA]</scope>
    <scope>ALTERNATIVE SPLICING (ISOFORMS 1 AND 2)</scope>
    <scope>TISSUE SPECIFICITY</scope>
</reference>
<reference key="3">
    <citation type="journal article" date="2004" name="Genome Res.">
        <title>The status, quality, and expansion of the NIH full-length cDNA project: the Mammalian Gene Collection (MGC).</title>
        <authorList>
            <consortium name="The MGC Project Team"/>
        </authorList>
    </citation>
    <scope>NUCLEOTIDE SEQUENCE [LARGE SCALE MRNA] (ISOFORM 1)</scope>
    <source>
        <tissue>Brain</tissue>
    </source>
</reference>
<reference key="4">
    <citation type="journal article" date="2000" name="Biochem. Biophys. Res. Commun.">
        <title>Establishment of the anti-Klotho monoclonal antibodies and detection of Klotho protein in kidneys.</title>
        <authorList>
            <person name="Kato Y."/>
            <person name="Arakawa E."/>
            <person name="Kinoshita S."/>
            <person name="Shirai A."/>
            <person name="Furuya A."/>
            <person name="Yamano K."/>
            <person name="Nakamura K."/>
            <person name="Iida A."/>
            <person name="Anazawa H."/>
            <person name="Koh N."/>
            <person name="Iwano A."/>
            <person name="Imura A."/>
            <person name="Fujimori T."/>
            <person name="Kuro-o M."/>
            <person name="Hanai N."/>
            <person name="Takeshige K."/>
            <person name="Nabeshima Y."/>
        </authorList>
    </citation>
    <scope>TISSUE SPECIFICITY</scope>
    <scope>SUBCELLULAR LOCATION</scope>
</reference>
<reference key="5">
    <citation type="journal article" date="2000" name="Biochem. Biophys. Res. Commun.">
        <title>Disruption of klotho gene causes an abnormal energy homeostasis in mice.</title>
        <authorList>
            <person name="Mori K."/>
            <person name="Yahata K."/>
            <person name="Mukoyama M."/>
            <person name="Suganami T."/>
            <person name="Makino H."/>
            <person name="Nagae T."/>
            <person name="Masuzaki H."/>
            <person name="Ogawa Y."/>
            <person name="Sugawara A."/>
            <person name="Nabeshima Y."/>
            <person name="Nakao K."/>
        </authorList>
    </citation>
    <scope>FUNCTION</scope>
    <scope>DISRUPTION PHENOTYPE</scope>
</reference>
<reference key="6">
    <citation type="journal article" date="2000" name="Metabolism">
        <title>Decreased insulin production and increased insulin sensitivity in the klotho mutant mouse, a novel animal model for human aging.</title>
        <authorList>
            <person name="Utsugi T."/>
            <person name="Ohno T."/>
            <person name="Ohyama Y."/>
            <person name="Uchiyama T."/>
            <person name="Saito Y."/>
            <person name="Matsumura Y."/>
            <person name="Aizawa H."/>
            <person name="Itoh H."/>
            <person name="Kurabayashi M."/>
            <person name="Kawazu S."/>
            <person name="Tomono S."/>
            <person name="Oka Y."/>
            <person name="Suga T."/>
            <person name="Kuro-o M."/>
            <person name="Nabeshima Y."/>
            <person name="Nagai R."/>
        </authorList>
    </citation>
    <scope>FUNCTION</scope>
</reference>
<reference key="7">
    <citation type="journal article" date="2001" name="Life Sci.">
        <title>Upregulation of the klotho gene expression by thyroid hormone and during adipose differentiation in 3T3-L1 adipocytes.</title>
        <authorList>
            <person name="Mizuno I."/>
            <person name="Takahashi Y."/>
            <person name="Okimura Y."/>
            <person name="Kaji H."/>
            <person name="Chihara K."/>
        </authorList>
    </citation>
    <scope>INDUCTION</scope>
    <scope>TISSUE SPECIFICITY</scope>
</reference>
<reference key="8">
    <citation type="journal article" date="2002" name="Hear. Res.">
        <title>Expression of Klotho protein in the inner ear.</title>
        <authorList>
            <person name="Kamemori M."/>
            <person name="Ohyama Y."/>
            <person name="Kurabayashi M."/>
            <person name="Takahashi K."/>
            <person name="Nagai R."/>
            <person name="Furuya N."/>
        </authorList>
    </citation>
    <scope>SUBCELLULAR LOCATION</scope>
    <scope>TISSUE SPECIFICITY</scope>
</reference>
<reference key="9">
    <citation type="journal article" date="2003" name="Mol. Endocrinol.">
        <title>Klotho, a gene related to a syndrome resembling human premature aging, functions in a negative regulatory circuit of vitamin D endocrine system.</title>
        <authorList>
            <person name="Tsujikawa H."/>
            <person name="Kurotaki Y."/>
            <person name="Fujimori T."/>
            <person name="Fukuda K."/>
            <person name="Nabeshima Y."/>
        </authorList>
    </citation>
    <scope>FUNCTION</scope>
    <scope>INDUCTION</scope>
</reference>
<reference key="10">
    <citation type="journal article" date="2004" name="Cardiovasc. Res.">
        <title>HMG-CoA reductase inhibitors up-regulate anti-aging klotho mRNA via RhoA inactivation in IMCD3 cells.</title>
        <authorList>
            <person name="Narumiya H."/>
            <person name="Sasaki S."/>
            <person name="Kuwahara N."/>
            <person name="Irie H."/>
            <person name="Kusaba T."/>
            <person name="Kameyama H."/>
            <person name="Tamagaki K."/>
            <person name="Hatta T."/>
            <person name="Takeda K."/>
            <person name="Matsubara H."/>
        </authorList>
    </citation>
    <scope>INDUCTION</scope>
</reference>
<reference key="11">
    <citation type="journal article" date="2004" name="Cell Struct. Funct.">
        <title>Immunohistochemical localization of Klotho protein in brain, kidney, and reproductive organs of mice.</title>
        <authorList>
            <person name="Li S.-A."/>
            <person name="Watanabe M."/>
            <person name="Yamada H."/>
            <person name="Nagai A."/>
            <person name="Kinuta M."/>
            <person name="Takei K."/>
        </authorList>
    </citation>
    <scope>SUBCELLULAR LOCATION</scope>
    <scope>TISSUE SPECIFICITY</scope>
</reference>
<reference key="12">
    <citation type="journal article" date="2004" name="FEBS Lett.">
        <title>Secreted Klotho protein in sera and CSF: implication for post-translational cleavage in release of Klotho protein from cell membrane.</title>
        <authorList>
            <person name="Imura A."/>
            <person name="Iwano A."/>
            <person name="Tohyama O."/>
            <person name="Tsuji Y."/>
            <person name="Nozaki K."/>
            <person name="Hashimoto N."/>
            <person name="Fujimori T."/>
            <person name="Nabeshima Y."/>
        </authorList>
    </citation>
    <scope>CLEAVAGE</scope>
    <scope>TISSUE SPECIFICITY</scope>
    <scope>SUBUNIT</scope>
    <scope>GLYCOSYLATION</scope>
    <scope>SUBCELLULAR LOCATION</scope>
</reference>
<reference key="13">
    <citation type="journal article" date="2004" name="J. Biol. Chem.">
        <title>Klotho is a novel beta-glucuronidase capable of hydrolyzing steroid beta-glucuronides.</title>
        <authorList>
            <person name="Tohyama O."/>
            <person name="Imura A."/>
            <person name="Iwano A."/>
            <person name="Freund J.-N."/>
            <person name="Henrissat B."/>
            <person name="Fujimori T."/>
            <person name="Nabeshima Y."/>
        </authorList>
    </citation>
    <scope>ENZYME ACTIVITY</scope>
    <scope>ACTIVITY REGULATION</scope>
    <scope>BIOPHYSICOCHEMICAL PROPERTIES</scope>
</reference>
<reference key="14">
    <citation type="journal article" date="2005" name="Science">
        <title>Suppression of aging in mice by the hormone Klotho.</title>
        <authorList>
            <person name="Kurosu H."/>
            <person name="Yamamoto M."/>
            <person name="Clark J.D."/>
            <person name="Pastor J.V."/>
            <person name="Nandi A."/>
            <person name="Gurnani P."/>
            <person name="McGuinness O.P."/>
            <person name="Chikuda H."/>
            <person name="Yamaguchi M."/>
            <person name="Kawaguchi H."/>
            <person name="Shimomura I."/>
            <person name="Takayama Y."/>
            <person name="Herz J."/>
            <person name="Kahn C.R."/>
            <person name="Rosenblatt K.P."/>
            <person name="Kuro-o M."/>
        </authorList>
    </citation>
    <scope>FUNCTION</scope>
    <scope>LACK OF ENZYMATIC ACTIVITY</scope>
    <scope>TISSUE SPECIFICITY</scope>
    <scope>SUBCELLULAR LOCATION</scope>
</reference>
<reference key="15">
    <citation type="journal article" date="2006" name="Nature">
        <title>Klotho converts canonical FGF receptor into a specific receptor for FGF23.</title>
        <authorList>
            <person name="Urakawa I."/>
            <person name="Yamazaki Y."/>
            <person name="Shimada T."/>
            <person name="Iijima K."/>
            <person name="Hasegawa H."/>
            <person name="Okawa K."/>
            <person name="Fujita T."/>
            <person name="Fukumoto S."/>
            <person name="Yamashita T."/>
        </authorList>
    </citation>
    <scope>FUNCTION</scope>
    <scope>INTERACTION WITH FGF23 AND FGFR1</scope>
</reference>
<reference key="16">
    <citation type="journal article" date="2010" name="Cell">
        <title>A tissue-specific atlas of mouse protein phosphorylation and expression.</title>
        <authorList>
            <person name="Huttlin E.L."/>
            <person name="Jedrychowski M.P."/>
            <person name="Elias J.E."/>
            <person name="Goswami T."/>
            <person name="Rad R."/>
            <person name="Beausoleil S.A."/>
            <person name="Villen J."/>
            <person name="Haas W."/>
            <person name="Sowa M.E."/>
            <person name="Gygi S.P."/>
        </authorList>
    </citation>
    <scope>IDENTIFICATION BY MASS SPECTROMETRY [LARGE SCALE ANALYSIS]</scope>
    <source>
        <tissue>Kidney</tissue>
    </source>
</reference>
<proteinExistence type="evidence at protein level"/>
<evidence type="ECO:0000255" key="1"/>
<evidence type="ECO:0000269" key="2">
    <source>
    </source>
</evidence>
<evidence type="ECO:0000269" key="3">
    <source>
    </source>
</evidence>
<evidence type="ECO:0000269" key="4">
    <source>
    </source>
</evidence>
<evidence type="ECO:0000269" key="5">
    <source>
    </source>
</evidence>
<evidence type="ECO:0000269" key="6">
    <source>
    </source>
</evidence>
<evidence type="ECO:0000269" key="7">
    <source>
    </source>
</evidence>
<evidence type="ECO:0000269" key="8">
    <source>
    </source>
</evidence>
<evidence type="ECO:0000269" key="9">
    <source>
    </source>
</evidence>
<evidence type="ECO:0000269" key="10">
    <source>
    </source>
</evidence>
<evidence type="ECO:0000269" key="11">
    <source>
    </source>
</evidence>
<evidence type="ECO:0000269" key="12">
    <source>
    </source>
</evidence>
<evidence type="ECO:0000269" key="13">
    <source>
    </source>
</evidence>
<evidence type="ECO:0000269" key="14">
    <source>
    </source>
</evidence>
<evidence type="ECO:0000303" key="15">
    <source>
    </source>
</evidence>
<evidence type="ECO:0000305" key="16"/>
<evidence type="ECO:0000305" key="17">
    <source>
    </source>
</evidence>
<evidence type="ECO:0000305" key="18">
    <source>
    </source>
</evidence>
<dbReference type="EC" id="3.2.1.31"/>
<dbReference type="EMBL" id="AB005141">
    <property type="protein sequence ID" value="BAA23381.1"/>
    <property type="molecule type" value="mRNA"/>
</dbReference>
<dbReference type="EMBL" id="AB010088">
    <property type="protein sequence ID" value="BAA25307.1"/>
    <property type="molecule type" value="mRNA"/>
</dbReference>
<dbReference type="EMBL" id="AB010091">
    <property type="protein sequence ID" value="BAA25308.1"/>
    <property type="molecule type" value="Genomic_DNA"/>
</dbReference>
<dbReference type="EMBL" id="AB010091">
    <property type="protein sequence ID" value="BAA25309.1"/>
    <property type="molecule type" value="Genomic_DNA"/>
</dbReference>
<dbReference type="EMBL" id="BC138258">
    <property type="protein sequence ID" value="AAI38259.1"/>
    <property type="molecule type" value="mRNA"/>
</dbReference>
<dbReference type="EMBL" id="BC138259">
    <property type="protein sequence ID" value="AAI38260.1"/>
    <property type="molecule type" value="mRNA"/>
</dbReference>
<dbReference type="CCDS" id="CCDS19889.1">
    <molecule id="O35082-1"/>
</dbReference>
<dbReference type="RefSeq" id="NP_038851.2">
    <molecule id="O35082-1"/>
    <property type="nucleotide sequence ID" value="NM_013823.2"/>
</dbReference>
<dbReference type="SMR" id="O35082"/>
<dbReference type="BioGRID" id="200958">
    <property type="interactions" value="8"/>
</dbReference>
<dbReference type="CORUM" id="O35082"/>
<dbReference type="DIP" id="DIP-39894N"/>
<dbReference type="FunCoup" id="O35082">
    <property type="interactions" value="171"/>
</dbReference>
<dbReference type="IntAct" id="O35082">
    <property type="interactions" value="10"/>
</dbReference>
<dbReference type="MINT" id="O35082"/>
<dbReference type="STRING" id="10090.ENSMUSP00000077899"/>
<dbReference type="CAZy" id="GH1">
    <property type="family name" value="Glycoside Hydrolase Family 1"/>
</dbReference>
<dbReference type="GlyCosmos" id="O35082">
    <property type="glycosylation" value="6 sites, No reported glycans"/>
</dbReference>
<dbReference type="GlyGen" id="O35082">
    <property type="glycosylation" value="6 sites, 2 N-linked glycans (3 sites)"/>
</dbReference>
<dbReference type="iPTMnet" id="O35082"/>
<dbReference type="PhosphoSitePlus" id="O35082"/>
<dbReference type="jPOST" id="O35082"/>
<dbReference type="PaxDb" id="10090-ENSMUSP00000077899"/>
<dbReference type="PeptideAtlas" id="O35082"/>
<dbReference type="ProteomicsDB" id="264854">
    <molecule id="O35082-1"/>
</dbReference>
<dbReference type="ProteomicsDB" id="264855">
    <molecule id="O35082-2"/>
</dbReference>
<dbReference type="ABCD" id="O35082">
    <property type="antibodies" value="1 sequenced antibody"/>
</dbReference>
<dbReference type="Antibodypedia" id="7860">
    <property type="antibodies" value="384 antibodies from 41 providers"/>
</dbReference>
<dbReference type="DNASU" id="16591"/>
<dbReference type="Ensembl" id="ENSMUST00000078856.8">
    <molecule id="O35082-1"/>
    <property type="protein sequence ID" value="ENSMUSP00000077899.7"/>
    <property type="gene ID" value="ENSMUSG00000058488.8"/>
</dbReference>
<dbReference type="GeneID" id="16591"/>
<dbReference type="KEGG" id="mmu:16591"/>
<dbReference type="UCSC" id="uc009auk.2">
    <molecule id="O35082-2"/>
    <property type="organism name" value="mouse"/>
</dbReference>
<dbReference type="UCSC" id="uc009aul.2">
    <molecule id="O35082-1"/>
    <property type="organism name" value="mouse"/>
</dbReference>
<dbReference type="AGR" id="MGI:1101771"/>
<dbReference type="CTD" id="9365"/>
<dbReference type="MGI" id="MGI:1101771">
    <property type="gene designation" value="Kl"/>
</dbReference>
<dbReference type="VEuPathDB" id="HostDB:ENSMUSG00000058488"/>
<dbReference type="eggNOG" id="KOG0626">
    <property type="taxonomic scope" value="Eukaryota"/>
</dbReference>
<dbReference type="GeneTree" id="ENSGT00940000157614"/>
<dbReference type="HOGENOM" id="CLU_001859_5_2_1"/>
<dbReference type="InParanoid" id="O35082"/>
<dbReference type="OMA" id="RKPHCVD"/>
<dbReference type="OrthoDB" id="65569at2759"/>
<dbReference type="PhylomeDB" id="O35082"/>
<dbReference type="TreeFam" id="TF314803"/>
<dbReference type="Reactome" id="R-MMU-109704">
    <property type="pathway name" value="PI3K Cascade"/>
</dbReference>
<dbReference type="Reactome" id="R-MMU-1257604">
    <property type="pathway name" value="PIP3 activates AKT signaling"/>
</dbReference>
<dbReference type="Reactome" id="R-MMU-190374">
    <property type="pathway name" value="FGFR1c and Klotho ligand binding and activation"/>
</dbReference>
<dbReference type="Reactome" id="R-MMU-5654219">
    <property type="pathway name" value="Phospholipase C-mediated cascade: FGFR1"/>
</dbReference>
<dbReference type="Reactome" id="R-MMU-5654687">
    <property type="pathway name" value="Downstream signaling of activated FGFR1"/>
</dbReference>
<dbReference type="Reactome" id="R-MMU-5654688">
    <property type="pathway name" value="SHC-mediated cascade:FGFR1"/>
</dbReference>
<dbReference type="Reactome" id="R-MMU-5654689">
    <property type="pathway name" value="PI-3K cascade:FGFR1"/>
</dbReference>
<dbReference type="Reactome" id="R-MMU-5654693">
    <property type="pathway name" value="FRS-mediated FGFR1 signaling"/>
</dbReference>
<dbReference type="Reactome" id="R-MMU-5654726">
    <property type="pathway name" value="Negative regulation of FGFR1 signaling"/>
</dbReference>
<dbReference type="Reactome" id="R-MMU-5673001">
    <property type="pathway name" value="RAF/MAP kinase cascade"/>
</dbReference>
<dbReference type="Reactome" id="R-MMU-6811558">
    <property type="pathway name" value="PI5P, PP2A and IER3 Regulate PI3K/AKT Signaling"/>
</dbReference>
<dbReference type="BioGRID-ORCS" id="16591">
    <property type="hits" value="9 hits in 78 CRISPR screens"/>
</dbReference>
<dbReference type="PRO" id="PR:O35082"/>
<dbReference type="Proteomes" id="UP000000589">
    <property type="component" value="Chromosome 5"/>
</dbReference>
<dbReference type="RNAct" id="O35082">
    <property type="molecule type" value="protein"/>
</dbReference>
<dbReference type="Bgee" id="ENSMUSG00000058488">
    <property type="expression patterns" value="Expressed in choroid plexus of fourth ventricle and 61 other cell types or tissues"/>
</dbReference>
<dbReference type="GO" id="GO:0016324">
    <property type="term" value="C:apical plasma membrane"/>
    <property type="evidence" value="ECO:0007669"/>
    <property type="project" value="UniProtKB-SubCell"/>
</dbReference>
<dbReference type="GO" id="GO:0005576">
    <property type="term" value="C:extracellular region"/>
    <property type="evidence" value="ECO:0000250"/>
    <property type="project" value="MGI"/>
</dbReference>
<dbReference type="GO" id="GO:0016020">
    <property type="term" value="C:membrane"/>
    <property type="evidence" value="ECO:0000250"/>
    <property type="project" value="MGI"/>
</dbReference>
<dbReference type="GO" id="GO:0004566">
    <property type="term" value="F:beta-glucuronidase activity"/>
    <property type="evidence" value="ECO:0007669"/>
    <property type="project" value="UniProtKB-EC"/>
</dbReference>
<dbReference type="GO" id="GO:0017134">
    <property type="term" value="F:fibroblast growth factor binding"/>
    <property type="evidence" value="ECO:0000353"/>
    <property type="project" value="UniProtKB"/>
</dbReference>
<dbReference type="GO" id="GO:0005104">
    <property type="term" value="F:fibroblast growth factor receptor binding"/>
    <property type="evidence" value="ECO:0000353"/>
    <property type="project" value="UniProtKB"/>
</dbReference>
<dbReference type="GO" id="GO:0055074">
    <property type="term" value="P:calcium ion homeostasis"/>
    <property type="evidence" value="ECO:0000316"/>
    <property type="project" value="MGI"/>
</dbReference>
<dbReference type="GO" id="GO:0005975">
    <property type="term" value="P:carbohydrate metabolic process"/>
    <property type="evidence" value="ECO:0007669"/>
    <property type="project" value="InterPro"/>
</dbReference>
<dbReference type="GO" id="GO:0008340">
    <property type="term" value="P:determination of adult lifespan"/>
    <property type="evidence" value="ECO:0000315"/>
    <property type="project" value="MGI"/>
</dbReference>
<dbReference type="GO" id="GO:0006112">
    <property type="term" value="P:energy reserve metabolic process"/>
    <property type="evidence" value="ECO:0000315"/>
    <property type="project" value="MGI"/>
</dbReference>
<dbReference type="GO" id="GO:0003085">
    <property type="term" value="P:negative regulation of systemic arterial blood pressure"/>
    <property type="evidence" value="ECO:0007669"/>
    <property type="project" value="Ensembl"/>
</dbReference>
<dbReference type="GO" id="GO:0042421">
    <property type="term" value="P:norepinephrine biosynthetic process"/>
    <property type="evidence" value="ECO:0007669"/>
    <property type="project" value="Ensembl"/>
</dbReference>
<dbReference type="GO" id="GO:0030501">
    <property type="term" value="P:positive regulation of bone mineralization"/>
    <property type="evidence" value="ECO:0007669"/>
    <property type="project" value="Ensembl"/>
</dbReference>
<dbReference type="GO" id="GO:0090080">
    <property type="term" value="P:positive regulation of MAPKKK cascade by fibroblast growth factor receptor signaling pathway"/>
    <property type="evidence" value="ECO:0000316"/>
    <property type="project" value="MGI"/>
</dbReference>
<dbReference type="GO" id="GO:0014823">
    <property type="term" value="P:response to activity"/>
    <property type="evidence" value="ECO:0007669"/>
    <property type="project" value="Ensembl"/>
</dbReference>
<dbReference type="GO" id="GO:1990776">
    <property type="term" value="P:response to angiotensin"/>
    <property type="evidence" value="ECO:0007669"/>
    <property type="project" value="Ensembl"/>
</dbReference>
<dbReference type="GO" id="GO:0033280">
    <property type="term" value="P:response to vitamin D"/>
    <property type="evidence" value="ECO:0007669"/>
    <property type="project" value="Ensembl"/>
</dbReference>
<dbReference type="FunFam" id="3.20.20.80:FF:000042">
    <property type="entry name" value="Klotho"/>
    <property type="match status" value="1"/>
</dbReference>
<dbReference type="FunFam" id="3.20.20.80:FF:000062">
    <property type="entry name" value="Klotho"/>
    <property type="match status" value="1"/>
</dbReference>
<dbReference type="Gene3D" id="3.20.20.80">
    <property type="entry name" value="Glycosidases"/>
    <property type="match status" value="2"/>
</dbReference>
<dbReference type="InterPro" id="IPR001360">
    <property type="entry name" value="Glyco_hydro_1"/>
</dbReference>
<dbReference type="InterPro" id="IPR033132">
    <property type="entry name" value="Glyco_hydro_1_N_CS"/>
</dbReference>
<dbReference type="InterPro" id="IPR017853">
    <property type="entry name" value="Glycoside_hydrolase_SF"/>
</dbReference>
<dbReference type="PANTHER" id="PTHR10353">
    <property type="entry name" value="GLYCOSYL HYDROLASE"/>
    <property type="match status" value="1"/>
</dbReference>
<dbReference type="PANTHER" id="PTHR10353:SF10">
    <property type="entry name" value="KLOTHO"/>
    <property type="match status" value="1"/>
</dbReference>
<dbReference type="Pfam" id="PF00232">
    <property type="entry name" value="Glyco_hydro_1"/>
    <property type="match status" value="3"/>
</dbReference>
<dbReference type="PRINTS" id="PR00131">
    <property type="entry name" value="GLHYDRLASE1"/>
</dbReference>
<dbReference type="SUPFAM" id="SSF51445">
    <property type="entry name" value="(Trans)glycosidases"/>
    <property type="match status" value="2"/>
</dbReference>
<dbReference type="PROSITE" id="PS00653">
    <property type="entry name" value="GLYCOSYL_HYDROL_F1_2"/>
    <property type="match status" value="1"/>
</dbReference>
<sequence length="1014" mass="116398">MLARAPPRRPPRLVLLRLLLLHLLLLALRARCLSAEPGQGAQTWARFARAPAPEAAGLLHDTFPDGFLWAVGSAAYQTEGGWRQHGKGASIWDTFTHHSGAAPSDSPIVVAPSGAPSPPLSSTGDVASDSYNNVYRDTEGLRELGVTHYRFSISWARVLPNGTAGTPNREGLRYYRRLLERLRELGVQPVVTLYHWDLPQRLQDTYGGWANRALADHFRDYAELCFRHFGGQVKYWITIDNPYVVAWHGYATGRLAPGVRGSSRLGYLVAHNLLLAHAKVWHLYNTSFRPTQGGRVSIALSSHWINPRRMTDYNIRECQKSLDFVLGWFAKPIFIDGDYPESMKNNLSSLLPDFTESEKRLIRGTADFFALSFGPTLSFQLLDPNMKFRQLESPNLRQLLSWIDLEYNHPPIFIVENGWFVSGTTKRDDAKYMYYLKKFIMETLKAIRLDGVDVIGYTAWSLMDGFEWHRGYSIRRGLFYVDFLSQDKELLPKSSALFYQKLIEDNGFPPLPENQPLEGTFPCDFAWGVVDNYVQVDTTLSQFTDPNVYLWDVHHSKRLIKVDGVVAKKRKPYCVDFSAIRPQITLLREMRVTHFRFSLDWALILPLGNQTQVNHTVLHFYRCMISELVHANITPVVALWQPAAPHQGLPHALAKHGAWENPHTALAFADYANLCFKELGHWVNLWITMNEPNTRNMTYRAGHHLLRAHALAWHLYDDKFRAAQKGKISIALQADWIEPACPFSQNDKEVAERVLEFDIGWLAEPIFGSGDYPRVMRDWLNQKNNFLLPYFTEDEKKLVRGSFDFLAVSHYTTILVDWEKEDPMKYNDYLEVQEMTDITWLNSPSQVAVVPWGLRKVLNWLRFKYGDLPMYVTANGIDDDPHAEQDSLRIYYIKNYVNEALKAYVLDDINLCGYFAYSLSDRSAPKSGFYRYAANQFEPKPSMKHYRKIIDSNGFLGSGTLGRFCPEEYTVCTECGFFQTRKSLLVFISFLVFTFIISLALIFHYSKKGQRSYK</sequence>
<gene>
    <name type="primary">Kl</name>
</gene>
<organism>
    <name type="scientific">Mus musculus</name>
    <name type="common">Mouse</name>
    <dbReference type="NCBI Taxonomy" id="10090"/>
    <lineage>
        <taxon>Eukaryota</taxon>
        <taxon>Metazoa</taxon>
        <taxon>Chordata</taxon>
        <taxon>Craniata</taxon>
        <taxon>Vertebrata</taxon>
        <taxon>Euteleostomi</taxon>
        <taxon>Mammalia</taxon>
        <taxon>Eutheria</taxon>
        <taxon>Euarchontoglires</taxon>
        <taxon>Glires</taxon>
        <taxon>Rodentia</taxon>
        <taxon>Myomorpha</taxon>
        <taxon>Muroidea</taxon>
        <taxon>Muridae</taxon>
        <taxon>Murinae</taxon>
        <taxon>Mus</taxon>
        <taxon>Mus</taxon>
    </lineage>
</organism>
<feature type="signal peptide" evidence="1">
    <location>
        <begin position="1"/>
        <end position="34"/>
    </location>
</feature>
<feature type="chain" id="PRO_0000042247" description="Klotho">
    <location>
        <begin position="35"/>
        <end position="1014"/>
    </location>
</feature>
<feature type="chain" id="PRO_0000042248" description="Klotho peptide">
    <location>
        <begin position="35"/>
        <end status="unknown"/>
    </location>
</feature>
<feature type="topological domain" description="Extracellular" evidence="1">
    <location>
        <begin position="35"/>
        <end position="982"/>
    </location>
</feature>
<feature type="transmembrane region" description="Helical" evidence="1">
    <location>
        <begin position="983"/>
        <end position="1003"/>
    </location>
</feature>
<feature type="topological domain" description="Cytoplasmic" evidence="1">
    <location>
        <begin position="1004"/>
        <end position="1014"/>
    </location>
</feature>
<feature type="region of interest" description="Glycosyl hydrolase-1 1">
    <location>
        <begin position="59"/>
        <end position="508"/>
    </location>
</feature>
<feature type="region of interest" description="Glycosyl hydrolase-1 2">
    <location>
        <begin position="517"/>
        <end position="955"/>
    </location>
</feature>
<feature type="glycosylation site" description="N-linked (GlcNAc...) asparagine" evidence="1">
    <location>
        <position position="161"/>
    </location>
</feature>
<feature type="glycosylation site" description="N-linked (GlcNAc...) asparagine" evidence="1">
    <location>
        <position position="285"/>
    </location>
</feature>
<feature type="glycosylation site" description="N-linked (GlcNAc...) asparagine" evidence="1">
    <location>
        <position position="346"/>
    </location>
</feature>
<feature type="glycosylation site" description="N-linked (GlcNAc...) asparagine" evidence="1">
    <location>
        <position position="609"/>
    </location>
</feature>
<feature type="glycosylation site" description="N-linked (GlcNAc...) asparagine" evidence="1">
    <location>
        <position position="614"/>
    </location>
</feature>
<feature type="glycosylation site" description="N-linked (GlcNAc...) asparagine" evidence="1">
    <location>
        <position position="696"/>
    </location>
</feature>
<feature type="splice variant" id="VSP_015828" description="In isoform 2." evidence="15">
    <original>DTTLSQFTDPNVYL</original>
    <variation>SPLTKPSVGLLLPH</variation>
    <location>
        <begin position="537"/>
        <end position="550"/>
    </location>
</feature>
<feature type="splice variant" id="VSP_015829" description="In isoform 2." evidence="15">
    <location>
        <begin position="551"/>
        <end position="1014"/>
    </location>
</feature>
<feature type="sequence conflict" description="In Ref. 2; BAA25308." evidence="16" ref="2">
    <original>L</original>
    <variation>V</variation>
    <location>
        <position position="854"/>
    </location>
</feature>
<feature type="sequence conflict" description="In Ref. 1; BAA23381 and 2; BAA25308." evidence="16" ref="1 2">
    <original>K</original>
    <variation>R</variation>
    <location>
        <position position="948"/>
    </location>
</feature>
<accession>O35082</accession>
<accession>B2RR78</accession>
<accession>O70175</accession>
<accession>O70621</accession>
<comment type="function">
    <text>May have weak glycosidase activity towards glucuronylated steroids. However, it lacks essential active site Glu residues at positions 241 and 874, suggesting it may be inactive as a glycosidase in vivo. May be involved in the regulation of calcium and phosphorus homeostasis by inhibiting the synthesis of active vitamin D. Essential factor for the specific interaction between FGF23 and FGFR1.</text>
</comment>
<comment type="function">
    <text>The Klotho peptide generated by cleavage of the membrane-bound isoform may be an anti-aging circulating hormone which would extend life span by inhibiting insulin/IGF1 signaling.</text>
</comment>
<comment type="catalytic activity">
    <reaction evidence="7">
        <text>a beta-D-glucuronoside + H2O = D-glucuronate + an alcohol</text>
        <dbReference type="Rhea" id="RHEA:17633"/>
        <dbReference type="ChEBI" id="CHEBI:15377"/>
        <dbReference type="ChEBI" id="CHEBI:30879"/>
        <dbReference type="ChEBI" id="CHEBI:58720"/>
        <dbReference type="ChEBI" id="CHEBI:83411"/>
        <dbReference type="EC" id="3.2.1.31"/>
    </reaction>
</comment>
<comment type="activity regulation">
    <text evidence="7">Inhibited by D-saccharic acid 1,4-lactone and taurocholic acid.</text>
</comment>
<comment type="biophysicochemical properties">
    <kinetics>
        <KM evidence="7">0.249 mM for 4-methylumbelliferylglucuronide</KM>
        <KM evidence="7">0.251 mM for estrone 3-beta-D-glucuronide</KM>
        <KM evidence="7">0.174 mM for beta-estradiol 3-beta-D-glucuronide</KM>
        <KM evidence="7">0.251 mM for estriol 3-beta-D-glucuronide</KM>
        <Vmax evidence="7">0.62 uM/h/ug enzyme</Vmax>
    </kinetics>
    <phDependence>
        <text evidence="7">Optimum pH is 5.5.</text>
    </phDependence>
</comment>
<comment type="subunit">
    <text evidence="8 12">Homodimer. Interacts with FGF23 and FGFR1.</text>
</comment>
<comment type="interaction">
    <interactant intactId="EBI-1570828">
        <id>O35082</id>
    </interactant>
    <interactant intactId="EBI-7953898">
        <id>P16092</id>
        <label>Fgfr1</label>
    </interactant>
    <organismsDiffer>false</organismsDiffer>
    <experiments>2</experiments>
</comment>
<comment type="interaction">
    <interactant intactId="EBI-1570828">
        <id>O35082</id>
    </interactant>
    <interactant intactId="EBI-15820536">
        <id>Q61851-1</id>
        <label>Fgfr3</label>
    </interactant>
    <organismsDiffer>false</organismsDiffer>
    <experiments>2</experiments>
</comment>
<comment type="interaction">
    <interactant intactId="EBI-1570828">
        <id>O35082</id>
    </interactant>
    <interactant intactId="EBI-15633599">
        <id>Q03142</id>
        <label>Fgfr4</label>
    </interactant>
    <organismsDiffer>false</organismsDiffer>
    <experiments>2</experiments>
</comment>
<comment type="interaction">
    <interactant intactId="EBI-1570828">
        <id>O35082</id>
    </interactant>
    <interactant intactId="EBI-1570911">
        <id>P04426</id>
        <label>Wnt1</label>
    </interactant>
    <organismsDiffer>false</organismsDiffer>
    <experiments>2</experiments>
</comment>
<comment type="interaction">
    <interactant intactId="EBI-1570828">
        <id>O35082</id>
    </interactant>
    <interactant intactId="EBI-1570853">
        <id>P17553</id>
        <label>Wnt3</label>
    </interactant>
    <organismsDiffer>false</organismsDiffer>
    <experiments>4</experiments>
</comment>
<comment type="interaction">
    <interactant intactId="EBI-1570828">
        <id>O35082</id>
    </interactant>
    <interactant intactId="EBI-1570945">
        <id>P22724</id>
        <label>Wnt4</label>
    </interactant>
    <organismsDiffer>false</organismsDiffer>
    <experiments>2</experiments>
</comment>
<comment type="interaction">
    <interactant intactId="EBI-1570828">
        <id>O35082</id>
    </interactant>
    <interactant intactId="EBI-1570983">
        <id>P22725</id>
        <label>Wnt5a</label>
    </interactant>
    <organismsDiffer>false</organismsDiffer>
    <experiments>2</experiments>
</comment>
<comment type="interaction">
    <interactant intactId="EBI-1570828">
        <id>O35082</id>
    </interactant>
    <interactant intactId="EBI-6594125">
        <id>Q9GZV9</id>
        <label>FGF23</label>
    </interactant>
    <organismsDiffer>true</organismsDiffer>
    <experiments>5</experiments>
</comment>
<comment type="interaction">
    <interactant intactId="EBI-1570828">
        <id>O35082</id>
    </interactant>
    <interactant intactId="EBI-1028277">
        <id>P11362</id>
        <label>FGFR1</label>
    </interactant>
    <organismsDiffer>true</organismsDiffer>
    <experiments>2</experiments>
</comment>
<comment type="interaction">
    <interactant intactId="EBI-1570828">
        <id>O35082</id>
    </interactant>
    <interactant intactId="EBI-15609945">
        <id>P11362-7</id>
        <label>FGFR1</label>
    </interactant>
    <organismsDiffer>true</organismsDiffer>
    <experiments>3</experiments>
</comment>
<comment type="subcellular location">
    <molecule>Isoform 1</molecule>
    <subcellularLocation>
        <location evidence="2 5 8 13">Cell membrane</location>
        <topology evidence="18">Single-pass type I membrane protein</topology>
    </subcellularLocation>
    <subcellularLocation>
        <location evidence="10">Apical cell membrane</location>
        <topology evidence="17">Single-pass type I membrane protein</topology>
    </subcellularLocation>
    <text evidence="11">Isoform 1 shedding leads to a soluble peptide.</text>
</comment>
<comment type="subcellular location">
    <molecule>Isoform 2</molecule>
    <subcellularLocation>
        <location evidence="2 8">Secreted</location>
    </subcellularLocation>
</comment>
<comment type="subcellular location">
    <molecule>Klotho peptide</molecule>
    <subcellularLocation>
        <location evidence="11">Secreted</location>
    </subcellularLocation>
</comment>
<comment type="alternative products">
    <event type="alternative splicing"/>
    <isoform>
        <id>O35082-1</id>
        <name>1</name>
        <name>Membrane-bound</name>
        <sequence type="displayed"/>
    </isoform>
    <isoform>
        <id>O35082-2</id>
        <name>2</name>
        <name>Secreted</name>
        <sequence type="described" ref="VSP_015828 VSP_015829"/>
    </isoform>
</comment>
<comment type="tissue specificity">
    <text evidence="2 4 5 8 10 11 13 14">Membrane-bound protein is present in distal renal tubules, inner ear, ependymal cells of brain choroid plexus, elongating spermatids and mature oocytes (at protein level). Soluble peptide is present in serum (100 pM) and cerebrospinal fluid. Expressed strongly in kidney, moderately in brain choroid plexus, and at low levels in pituitary, placenta, skeletal muscle, urinary bladder, aorta, pancreas, testis, ovary, colon, thyroid gland and adipocytes.</text>
</comment>
<comment type="developmental stage">
    <text evidence="13">Not expressed in the embryo. Expressed in the kidney of newborns.</text>
</comment>
<comment type="induction">
    <text evidence="4 6 9">Induced by 1,25-dihydroxyvitamin D(3) in kidney. Down-regulated by angiotensin II and up-regulated by statins through modulation of the RhoA pathway in epithelial cells (in vitro). Isoform 1 (but not isoform 2) is up-regulated by thyroid hormone in adipocytes.</text>
</comment>
<comment type="domain">
    <text>Contains 2 glycosyl hydrolase 1 regions. However, the first region lacks the essential Glu active site residue at position 241, and the second one lacks the essential Glu active site residue at position 874.</text>
</comment>
<comment type="PTM">
    <text evidence="8">N-glycosylated.</text>
</comment>
<comment type="disruption phenotype">
    <text evidence="3">Mice display a syndrome resembling to human aging, with short lifespan, infertility, atherosclerosis, skin atrophy, osteoporosis and emphysema. They have various metabolic abnormalities, including increased insulin sensitivity and decreased insulin production. Mice overexpressing Kl have increased resistance to insulin and IGF1, a lifespan extended of more than 20%, and generate fewer offspring.</text>
</comment>
<comment type="miscellaneous">
    <molecule>Isoform 1</molecule>
    <text>Predominates over the secreted form by more than 10 times in all tissues examined.</text>
</comment>
<comment type="similarity">
    <text evidence="16">Belongs to the glycosyl hydrolase 1 family. Klotho subfamily.</text>
</comment>
<comment type="online information" name="Protein Spotlight">
    <link uri="https://www.proteinspotlight.org/back_issues/065"/>
    <text>The thread of life - Issue 65 of December 2005</text>
</comment>
<name>KLOT_MOUSE</name>
<keyword id="KW-0025">Alternative splicing</keyword>
<keyword id="KW-1003">Cell membrane</keyword>
<keyword id="KW-0325">Glycoprotein</keyword>
<keyword id="KW-0326">Glycosidase</keyword>
<keyword id="KW-0378">Hydrolase</keyword>
<keyword id="KW-0472">Membrane</keyword>
<keyword id="KW-1185">Reference proteome</keyword>
<keyword id="KW-0677">Repeat</keyword>
<keyword id="KW-0964">Secreted</keyword>
<keyword id="KW-0732">Signal</keyword>
<keyword id="KW-0812">Transmembrane</keyword>
<keyword id="KW-1133">Transmembrane helix</keyword>